<dbReference type="EMBL" id="AB053309">
    <property type="protein sequence ID" value="BAB69018.1"/>
    <property type="status" value="ALT_FRAME"/>
    <property type="molecule type" value="mRNA"/>
</dbReference>
<dbReference type="EMBL" id="AB053310">
    <property type="protein sequence ID" value="BAB69019.1"/>
    <property type="molecule type" value="mRNA"/>
</dbReference>
<dbReference type="EMBL" id="AY032876">
    <property type="protein sequence ID" value="AAK66819.2"/>
    <property type="molecule type" value="mRNA"/>
</dbReference>
<dbReference type="EMBL" id="AF454946">
    <property type="protein sequence ID" value="AAL62330.1"/>
    <property type="molecule type" value="mRNA"/>
</dbReference>
<dbReference type="EMBL" id="AK025232">
    <property type="protein sequence ID" value="BAB15088.1"/>
    <property type="status" value="ALT_INIT"/>
    <property type="molecule type" value="mRNA"/>
</dbReference>
<dbReference type="EMBL" id="AK304014">
    <property type="protein sequence ID" value="BAG64929.1"/>
    <property type="molecule type" value="mRNA"/>
</dbReference>
<dbReference type="EMBL" id="AC010900">
    <property type="protein sequence ID" value="AAY24288.1"/>
    <property type="molecule type" value="Genomic_DNA"/>
</dbReference>
<dbReference type="EMBL" id="CH471063">
    <property type="protein sequence ID" value="EAW70320.1"/>
    <property type="molecule type" value="Genomic_DNA"/>
</dbReference>
<dbReference type="EMBL" id="BC033777">
    <property type="protein sequence ID" value="AAH33777.1"/>
    <property type="molecule type" value="mRNA"/>
</dbReference>
<dbReference type="EMBL" id="AL834188">
    <property type="protein sequence ID" value="CAD38882.2"/>
    <property type="molecule type" value="mRNA"/>
</dbReference>
<dbReference type="CCDS" id="CCDS42801.1">
    <molecule id="Q8N187-1"/>
</dbReference>
<dbReference type="CCDS" id="CCDS63091.1">
    <molecule id="Q8N187-3"/>
</dbReference>
<dbReference type="RefSeq" id="NP_001098056.1">
    <molecule id="Q8N187-1"/>
    <property type="nucleotide sequence ID" value="NM_001104586.4"/>
</dbReference>
<dbReference type="RefSeq" id="NP_001269839.1">
    <molecule id="Q8N187-3"/>
    <property type="nucleotide sequence ID" value="NM_001282910.3"/>
</dbReference>
<dbReference type="RefSeq" id="NP_001269840.1">
    <molecule id="Q8N187-3"/>
    <property type="nucleotide sequence ID" value="NM_001282911.3"/>
</dbReference>
<dbReference type="RefSeq" id="NP_001309356.1">
    <molecule id="Q8N187-1"/>
    <property type="nucleotide sequence ID" value="NM_001322427.3"/>
</dbReference>
<dbReference type="RefSeq" id="NP_001309357.1">
    <molecule id="Q8N187-1"/>
    <property type="nucleotide sequence ID" value="NM_001322428.3"/>
</dbReference>
<dbReference type="RefSeq" id="NP_079020.13">
    <molecule id="Q8N187-1"/>
    <property type="nucleotide sequence ID" value="NM_024744.15"/>
</dbReference>
<dbReference type="RefSeq" id="XP_005246915.1">
    <property type="nucleotide sequence ID" value="XM_005246858.3"/>
</dbReference>
<dbReference type="RefSeq" id="XP_005246916.1">
    <property type="nucleotide sequence ID" value="XM_005246859.3"/>
</dbReference>
<dbReference type="RefSeq" id="XP_011510169.1">
    <property type="nucleotide sequence ID" value="XM_011511867.2"/>
</dbReference>
<dbReference type="RefSeq" id="XP_016860450.1">
    <property type="nucleotide sequence ID" value="XM_017004961.1"/>
</dbReference>
<dbReference type="RefSeq" id="XP_054199937.1">
    <molecule id="Q8N187-1"/>
    <property type="nucleotide sequence ID" value="XM_054343962.1"/>
</dbReference>
<dbReference type="RefSeq" id="XP_054199938.1">
    <molecule id="Q8N187-1"/>
    <property type="nucleotide sequence ID" value="XM_054343963.1"/>
</dbReference>
<dbReference type="RefSeq" id="XP_054199939.1">
    <molecule id="Q8N187-1"/>
    <property type="nucleotide sequence ID" value="XM_054343964.1"/>
</dbReference>
<dbReference type="RefSeq" id="XP_054199940.1">
    <molecule id="Q8N187-1"/>
    <property type="nucleotide sequence ID" value="XM_054343965.1"/>
</dbReference>
<dbReference type="RefSeq" id="XP_054199941.1">
    <molecule id="Q8N187-1"/>
    <property type="nucleotide sequence ID" value="XM_054343966.1"/>
</dbReference>
<dbReference type="RefSeq" id="XP_054199942.1">
    <molecule id="Q8N187-1"/>
    <property type="nucleotide sequence ID" value="XM_054343967.1"/>
</dbReference>
<dbReference type="RefSeq" id="XP_054199943.1">
    <molecule id="Q8N187-1"/>
    <property type="nucleotide sequence ID" value="XM_054343968.1"/>
</dbReference>
<dbReference type="RefSeq" id="XP_054199944.1">
    <molecule id="Q8N187-1"/>
    <property type="nucleotide sequence ID" value="XM_054343969.1"/>
</dbReference>
<dbReference type="RefSeq" id="XP_054199948.1">
    <molecule id="Q8N187-3"/>
    <property type="nucleotide sequence ID" value="XM_054343973.1"/>
</dbReference>
<dbReference type="SMR" id="Q8N187"/>
<dbReference type="BioGRID" id="122897">
    <property type="interactions" value="3"/>
</dbReference>
<dbReference type="FunCoup" id="Q8N187">
    <property type="interactions" value="1724"/>
</dbReference>
<dbReference type="IntAct" id="Q8N187">
    <property type="interactions" value="8"/>
</dbReference>
<dbReference type="STRING" id="9606.ENSP00000414644"/>
<dbReference type="iPTMnet" id="Q8N187"/>
<dbReference type="PhosphoSitePlus" id="Q8N187"/>
<dbReference type="BioMuta" id="CARF"/>
<dbReference type="DMDM" id="85540610"/>
<dbReference type="jPOST" id="Q8N187"/>
<dbReference type="MassIVE" id="Q8N187"/>
<dbReference type="PaxDb" id="9606-ENSP00000384006"/>
<dbReference type="PeptideAtlas" id="Q8N187"/>
<dbReference type="ProteomicsDB" id="32363"/>
<dbReference type="ProteomicsDB" id="71573">
    <molecule id="Q8N187-1"/>
</dbReference>
<dbReference type="Antibodypedia" id="34159">
    <property type="antibodies" value="198 antibodies from 28 providers"/>
</dbReference>
<dbReference type="DNASU" id="79800"/>
<dbReference type="Ensembl" id="ENST00000320443.12">
    <molecule id="Q8N187-3"/>
    <property type="protein sequence ID" value="ENSP00000316224.9"/>
    <property type="gene ID" value="ENSG00000138380.18"/>
</dbReference>
<dbReference type="Ensembl" id="ENST00000402905.7">
    <molecule id="Q8N187-1"/>
    <property type="protein sequence ID" value="ENSP00000384006.2"/>
    <property type="gene ID" value="ENSG00000138380.18"/>
</dbReference>
<dbReference type="Ensembl" id="ENST00000428585.5">
    <molecule id="Q8N187-3"/>
    <property type="protein sequence ID" value="ENSP00000396221.1"/>
    <property type="gene ID" value="ENSG00000138380.18"/>
</dbReference>
<dbReference type="Ensembl" id="ENST00000434998.5">
    <molecule id="Q8N187-2"/>
    <property type="protein sequence ID" value="ENSP00000415948.1"/>
    <property type="gene ID" value="ENSG00000138380.18"/>
</dbReference>
<dbReference type="Ensembl" id="ENST00000438828.4">
    <molecule id="Q8N187-1"/>
    <property type="protein sequence ID" value="ENSP00000414644.1"/>
    <property type="gene ID" value="ENSG00000138380.18"/>
</dbReference>
<dbReference type="GeneID" id="79800"/>
<dbReference type="KEGG" id="hsa:79800"/>
<dbReference type="MANE-Select" id="ENST00000438828.4">
    <property type="protein sequence ID" value="ENSP00000414644.1"/>
    <property type="RefSeq nucleotide sequence ID" value="NM_024744.17"/>
    <property type="RefSeq protein sequence ID" value="NP_079020.13"/>
</dbReference>
<dbReference type="UCSC" id="uc002uzn.5">
    <molecule id="Q8N187-1"/>
    <property type="organism name" value="human"/>
</dbReference>
<dbReference type="AGR" id="HGNC:14435"/>
<dbReference type="CTD" id="79800"/>
<dbReference type="DisGeNET" id="79800"/>
<dbReference type="GeneCards" id="CARF"/>
<dbReference type="HGNC" id="HGNC:14435">
    <property type="gene designation" value="CARF"/>
</dbReference>
<dbReference type="HPA" id="ENSG00000138380">
    <property type="expression patterns" value="Low tissue specificity"/>
</dbReference>
<dbReference type="MIM" id="607586">
    <property type="type" value="gene"/>
</dbReference>
<dbReference type="neXtProt" id="NX_Q8N187"/>
<dbReference type="OpenTargets" id="ENSG00000138380"/>
<dbReference type="PharmGKB" id="PA24748"/>
<dbReference type="VEuPathDB" id="HostDB:ENSG00000138380"/>
<dbReference type="eggNOG" id="ENOG502QWYS">
    <property type="taxonomic scope" value="Eukaryota"/>
</dbReference>
<dbReference type="GeneTree" id="ENSGT00390000013916"/>
<dbReference type="HOGENOM" id="CLU_078252_0_0_1"/>
<dbReference type="InParanoid" id="Q8N187"/>
<dbReference type="OMA" id="MMIVTSQ"/>
<dbReference type="OrthoDB" id="2668416at2759"/>
<dbReference type="PAN-GO" id="Q8N187">
    <property type="GO annotations" value="4 GO annotations based on evolutionary models"/>
</dbReference>
<dbReference type="PhylomeDB" id="Q8N187"/>
<dbReference type="TreeFam" id="TF333279"/>
<dbReference type="PathwayCommons" id="Q8N187"/>
<dbReference type="SignaLink" id="Q8N187"/>
<dbReference type="BioGRID-ORCS" id="79800">
    <property type="hits" value="23 hits in 1122 CRISPR screens"/>
</dbReference>
<dbReference type="ChiTaRS" id="CARF">
    <property type="organism name" value="human"/>
</dbReference>
<dbReference type="GeneWiki" id="ALS2CR8"/>
<dbReference type="GenomeRNAi" id="79800"/>
<dbReference type="Pharos" id="Q8N187">
    <property type="development level" value="Tbio"/>
</dbReference>
<dbReference type="PRO" id="PR:Q8N187"/>
<dbReference type="Proteomes" id="UP000005640">
    <property type="component" value="Chromosome 2"/>
</dbReference>
<dbReference type="RNAct" id="Q8N187">
    <property type="molecule type" value="protein"/>
</dbReference>
<dbReference type="Bgee" id="ENSG00000138380">
    <property type="expression patterns" value="Expressed in calcaneal tendon and 138 other cell types or tissues"/>
</dbReference>
<dbReference type="ExpressionAtlas" id="Q8N187">
    <property type="expression patterns" value="baseline and differential"/>
</dbReference>
<dbReference type="GO" id="GO:0001652">
    <property type="term" value="C:granular component"/>
    <property type="evidence" value="ECO:0007669"/>
    <property type="project" value="Ensembl"/>
</dbReference>
<dbReference type="GO" id="GO:0005634">
    <property type="term" value="C:nucleus"/>
    <property type="evidence" value="ECO:0000250"/>
    <property type="project" value="UniProtKB"/>
</dbReference>
<dbReference type="GO" id="GO:0003677">
    <property type="term" value="F:DNA binding"/>
    <property type="evidence" value="ECO:0000314"/>
    <property type="project" value="UniProtKB"/>
</dbReference>
<dbReference type="GO" id="GO:0001228">
    <property type="term" value="F:DNA-binding transcription activator activity, RNA polymerase II-specific"/>
    <property type="evidence" value="ECO:0000314"/>
    <property type="project" value="UniProtKB"/>
</dbReference>
<dbReference type="GO" id="GO:0000981">
    <property type="term" value="F:DNA-binding transcription factor activity, RNA polymerase II-specific"/>
    <property type="evidence" value="ECO:0000318"/>
    <property type="project" value="GO_Central"/>
</dbReference>
<dbReference type="GO" id="GO:0000978">
    <property type="term" value="F:RNA polymerase II cis-regulatory region sequence-specific DNA binding"/>
    <property type="evidence" value="ECO:0000318"/>
    <property type="project" value="GO_Central"/>
</dbReference>
<dbReference type="GO" id="GO:0071277">
    <property type="term" value="P:cellular response to calcium ion"/>
    <property type="evidence" value="ECO:0000314"/>
    <property type="project" value="UniProtKB"/>
</dbReference>
<dbReference type="GO" id="GO:0006357">
    <property type="term" value="P:regulation of transcription by RNA polymerase II"/>
    <property type="evidence" value="ECO:0000318"/>
    <property type="project" value="GO_Central"/>
</dbReference>
<dbReference type="InterPro" id="IPR029309">
    <property type="entry name" value="CaRF"/>
</dbReference>
<dbReference type="PANTHER" id="PTHR14694">
    <property type="entry name" value="CALCIUM-RESPONSIVE TRANSCRIPTION FACTOR"/>
    <property type="match status" value="1"/>
</dbReference>
<dbReference type="PANTHER" id="PTHR14694:SF1">
    <property type="entry name" value="CALCIUM-RESPONSIVE TRANSCRIPTION FACTOR"/>
    <property type="match status" value="1"/>
</dbReference>
<dbReference type="Pfam" id="PF15299">
    <property type="entry name" value="ALS2CR8"/>
    <property type="match status" value="1"/>
</dbReference>
<organism>
    <name type="scientific">Homo sapiens</name>
    <name type="common">Human</name>
    <dbReference type="NCBI Taxonomy" id="9606"/>
    <lineage>
        <taxon>Eukaryota</taxon>
        <taxon>Metazoa</taxon>
        <taxon>Chordata</taxon>
        <taxon>Craniata</taxon>
        <taxon>Vertebrata</taxon>
        <taxon>Euteleostomi</taxon>
        <taxon>Mammalia</taxon>
        <taxon>Eutheria</taxon>
        <taxon>Euarchontoglires</taxon>
        <taxon>Primates</taxon>
        <taxon>Haplorrhini</taxon>
        <taxon>Catarrhini</taxon>
        <taxon>Hominidae</taxon>
        <taxon>Homo</taxon>
    </lineage>
</organism>
<evidence type="ECO:0000250" key="1"/>
<evidence type="ECO:0000256" key="2">
    <source>
        <dbReference type="SAM" id="MobiDB-lite"/>
    </source>
</evidence>
<evidence type="ECO:0000269" key="3">
    <source>
    </source>
</evidence>
<evidence type="ECO:0000269" key="4">
    <source>
    </source>
</evidence>
<evidence type="ECO:0000303" key="5">
    <source>
    </source>
</evidence>
<evidence type="ECO:0000303" key="6">
    <source>
    </source>
</evidence>
<evidence type="ECO:0000305" key="7"/>
<gene>
    <name type="primary">CARF</name>
    <name type="synonym">ALS2CR8</name>
</gene>
<proteinExistence type="evidence at protein level"/>
<name>CARTF_HUMAN</name>
<reference key="1">
    <citation type="journal article" date="2001" name="Nat. Genet.">
        <title>A gene encoding a putative GTPase regulator is mutated in familial amyotrophic lateral sclerosis 2.</title>
        <authorList>
            <person name="Hadano S."/>
            <person name="Hand C.K."/>
            <person name="Osuga H."/>
            <person name="Yanagisawa Y."/>
            <person name="Otomo A."/>
            <person name="Devon R.S."/>
            <person name="Miyamoto N."/>
            <person name="Showguchi-Miyata J."/>
            <person name="Okada Y."/>
            <person name="Singaraja R."/>
            <person name="Figlewicz D.A."/>
            <person name="Kwiatkowski T."/>
            <person name="Hosler B.A."/>
            <person name="Sagie T."/>
            <person name="Skaug J."/>
            <person name="Nasir J."/>
            <person name="Brown R.H. Jr."/>
            <person name="Scherer S.W."/>
            <person name="Rouleau G.A."/>
            <person name="Hayden M.R."/>
            <person name="Ikeda J.-E."/>
        </authorList>
    </citation>
    <scope>NUCLEOTIDE SEQUENCE [MRNA] (ISOFORMS 1 AND 2)</scope>
</reference>
<reference key="2">
    <citation type="submission" date="2001-08" db="EMBL/GenBank/DDBJ databases">
        <title>NYD-SP24: cloning a novel gene related to testis development from human testis.</title>
        <authorList>
            <person name="Sha J.H."/>
        </authorList>
    </citation>
    <scope>NUCLEOTIDE SEQUENCE [MRNA] (ISOFORM 1)</scope>
    <source>
        <tissue>Testis</tissue>
    </source>
</reference>
<reference key="3">
    <citation type="journal article" date="2002" name="Neuron">
        <title>A calcium-responsive transcription factor, CaRF, that regulates neuronal activity-dependent expression of BDNF.</title>
        <authorList>
            <person name="Tao X."/>
            <person name="West A.E."/>
            <person name="Chen W.G."/>
            <person name="Corfas G."/>
            <person name="Greenberg M.E."/>
        </authorList>
    </citation>
    <scope>NUCLEOTIDE SEQUENCE [MRNA] (ISOFORM 1)</scope>
    <scope>FUNCTION</scope>
    <scope>DNA-BINDING</scope>
</reference>
<reference key="4">
    <citation type="journal article" date="2004" name="Nat. Genet.">
        <title>Complete sequencing and characterization of 21,243 full-length human cDNAs.</title>
        <authorList>
            <person name="Ota T."/>
            <person name="Suzuki Y."/>
            <person name="Nishikawa T."/>
            <person name="Otsuki T."/>
            <person name="Sugiyama T."/>
            <person name="Irie R."/>
            <person name="Wakamatsu A."/>
            <person name="Hayashi K."/>
            <person name="Sato H."/>
            <person name="Nagai K."/>
            <person name="Kimura K."/>
            <person name="Makita H."/>
            <person name="Sekine M."/>
            <person name="Obayashi M."/>
            <person name="Nishi T."/>
            <person name="Shibahara T."/>
            <person name="Tanaka T."/>
            <person name="Ishii S."/>
            <person name="Yamamoto J."/>
            <person name="Saito K."/>
            <person name="Kawai Y."/>
            <person name="Isono Y."/>
            <person name="Nakamura Y."/>
            <person name="Nagahari K."/>
            <person name="Murakami K."/>
            <person name="Yasuda T."/>
            <person name="Iwayanagi T."/>
            <person name="Wagatsuma M."/>
            <person name="Shiratori A."/>
            <person name="Sudo H."/>
            <person name="Hosoiri T."/>
            <person name="Kaku Y."/>
            <person name="Kodaira H."/>
            <person name="Kondo H."/>
            <person name="Sugawara M."/>
            <person name="Takahashi M."/>
            <person name="Kanda K."/>
            <person name="Yokoi T."/>
            <person name="Furuya T."/>
            <person name="Kikkawa E."/>
            <person name="Omura Y."/>
            <person name="Abe K."/>
            <person name="Kamihara K."/>
            <person name="Katsuta N."/>
            <person name="Sato K."/>
            <person name="Tanikawa M."/>
            <person name="Yamazaki M."/>
            <person name="Ninomiya K."/>
            <person name="Ishibashi T."/>
            <person name="Yamashita H."/>
            <person name="Murakawa K."/>
            <person name="Fujimori K."/>
            <person name="Tanai H."/>
            <person name="Kimata M."/>
            <person name="Watanabe M."/>
            <person name="Hiraoka S."/>
            <person name="Chiba Y."/>
            <person name="Ishida S."/>
            <person name="Ono Y."/>
            <person name="Takiguchi S."/>
            <person name="Watanabe S."/>
            <person name="Yosida M."/>
            <person name="Hotuta T."/>
            <person name="Kusano J."/>
            <person name="Kanehori K."/>
            <person name="Takahashi-Fujii A."/>
            <person name="Hara H."/>
            <person name="Tanase T.-O."/>
            <person name="Nomura Y."/>
            <person name="Togiya S."/>
            <person name="Komai F."/>
            <person name="Hara R."/>
            <person name="Takeuchi K."/>
            <person name="Arita M."/>
            <person name="Imose N."/>
            <person name="Musashino K."/>
            <person name="Yuuki H."/>
            <person name="Oshima A."/>
            <person name="Sasaki N."/>
            <person name="Aotsuka S."/>
            <person name="Yoshikawa Y."/>
            <person name="Matsunawa H."/>
            <person name="Ichihara T."/>
            <person name="Shiohata N."/>
            <person name="Sano S."/>
            <person name="Moriya S."/>
            <person name="Momiyama H."/>
            <person name="Satoh N."/>
            <person name="Takami S."/>
            <person name="Terashima Y."/>
            <person name="Suzuki O."/>
            <person name="Nakagawa S."/>
            <person name="Senoh A."/>
            <person name="Mizoguchi H."/>
            <person name="Goto Y."/>
            <person name="Shimizu F."/>
            <person name="Wakebe H."/>
            <person name="Hishigaki H."/>
            <person name="Watanabe T."/>
            <person name="Sugiyama A."/>
            <person name="Takemoto M."/>
            <person name="Kawakami B."/>
            <person name="Yamazaki M."/>
            <person name="Watanabe K."/>
            <person name="Kumagai A."/>
            <person name="Itakura S."/>
            <person name="Fukuzumi Y."/>
            <person name="Fujimori Y."/>
            <person name="Komiyama M."/>
            <person name="Tashiro H."/>
            <person name="Tanigami A."/>
            <person name="Fujiwara T."/>
            <person name="Ono T."/>
            <person name="Yamada K."/>
            <person name="Fujii Y."/>
            <person name="Ozaki K."/>
            <person name="Hirao M."/>
            <person name="Ohmori Y."/>
            <person name="Kawabata A."/>
            <person name="Hikiji T."/>
            <person name="Kobatake N."/>
            <person name="Inagaki H."/>
            <person name="Ikema Y."/>
            <person name="Okamoto S."/>
            <person name="Okitani R."/>
            <person name="Kawakami T."/>
            <person name="Noguchi S."/>
            <person name="Itoh T."/>
            <person name="Shigeta K."/>
            <person name="Senba T."/>
            <person name="Matsumura K."/>
            <person name="Nakajima Y."/>
            <person name="Mizuno T."/>
            <person name="Morinaga M."/>
            <person name="Sasaki M."/>
            <person name="Togashi T."/>
            <person name="Oyama M."/>
            <person name="Hata H."/>
            <person name="Watanabe M."/>
            <person name="Komatsu T."/>
            <person name="Mizushima-Sugano J."/>
            <person name="Satoh T."/>
            <person name="Shirai Y."/>
            <person name="Takahashi Y."/>
            <person name="Nakagawa K."/>
            <person name="Okumura K."/>
            <person name="Nagase T."/>
            <person name="Nomura N."/>
            <person name="Kikuchi H."/>
            <person name="Masuho Y."/>
            <person name="Yamashita R."/>
            <person name="Nakai K."/>
            <person name="Yada T."/>
            <person name="Nakamura Y."/>
            <person name="Ohara O."/>
            <person name="Isogai T."/>
            <person name="Sugano S."/>
        </authorList>
    </citation>
    <scope>NUCLEOTIDE SEQUENCE [LARGE SCALE MRNA] (ISOFORM 3)</scope>
    <scope>NUCLEOTIDE SEQUENCE [LARGE SCALE MRNA] OF 29-301 (ISOFORM 1)</scope>
    <source>
        <tissue>Colon</tissue>
        <tissue>Trachea</tissue>
    </source>
</reference>
<reference key="5">
    <citation type="journal article" date="2005" name="Nature">
        <title>Generation and annotation of the DNA sequences of human chromosomes 2 and 4.</title>
        <authorList>
            <person name="Hillier L.W."/>
            <person name="Graves T.A."/>
            <person name="Fulton R.S."/>
            <person name="Fulton L.A."/>
            <person name="Pepin K.H."/>
            <person name="Minx P."/>
            <person name="Wagner-McPherson C."/>
            <person name="Layman D."/>
            <person name="Wylie K."/>
            <person name="Sekhon M."/>
            <person name="Becker M.C."/>
            <person name="Fewell G.A."/>
            <person name="Delehaunty K.D."/>
            <person name="Miner T.L."/>
            <person name="Nash W.E."/>
            <person name="Kremitzki C."/>
            <person name="Oddy L."/>
            <person name="Du H."/>
            <person name="Sun H."/>
            <person name="Bradshaw-Cordum H."/>
            <person name="Ali J."/>
            <person name="Carter J."/>
            <person name="Cordes M."/>
            <person name="Harris A."/>
            <person name="Isak A."/>
            <person name="van Brunt A."/>
            <person name="Nguyen C."/>
            <person name="Du F."/>
            <person name="Courtney L."/>
            <person name="Kalicki J."/>
            <person name="Ozersky P."/>
            <person name="Abbott S."/>
            <person name="Armstrong J."/>
            <person name="Belter E.A."/>
            <person name="Caruso L."/>
            <person name="Cedroni M."/>
            <person name="Cotton M."/>
            <person name="Davidson T."/>
            <person name="Desai A."/>
            <person name="Elliott G."/>
            <person name="Erb T."/>
            <person name="Fronick C."/>
            <person name="Gaige T."/>
            <person name="Haakenson W."/>
            <person name="Haglund K."/>
            <person name="Holmes A."/>
            <person name="Harkins R."/>
            <person name="Kim K."/>
            <person name="Kruchowski S.S."/>
            <person name="Strong C.M."/>
            <person name="Grewal N."/>
            <person name="Goyea E."/>
            <person name="Hou S."/>
            <person name="Levy A."/>
            <person name="Martinka S."/>
            <person name="Mead K."/>
            <person name="McLellan M.D."/>
            <person name="Meyer R."/>
            <person name="Randall-Maher J."/>
            <person name="Tomlinson C."/>
            <person name="Dauphin-Kohlberg S."/>
            <person name="Kozlowicz-Reilly A."/>
            <person name="Shah N."/>
            <person name="Swearengen-Shahid S."/>
            <person name="Snider J."/>
            <person name="Strong J.T."/>
            <person name="Thompson J."/>
            <person name="Yoakum M."/>
            <person name="Leonard S."/>
            <person name="Pearman C."/>
            <person name="Trani L."/>
            <person name="Radionenko M."/>
            <person name="Waligorski J.E."/>
            <person name="Wang C."/>
            <person name="Rock S.M."/>
            <person name="Tin-Wollam A.-M."/>
            <person name="Maupin R."/>
            <person name="Latreille P."/>
            <person name="Wendl M.C."/>
            <person name="Yang S.-P."/>
            <person name="Pohl C."/>
            <person name="Wallis J.W."/>
            <person name="Spieth J."/>
            <person name="Bieri T.A."/>
            <person name="Berkowicz N."/>
            <person name="Nelson J.O."/>
            <person name="Osborne J."/>
            <person name="Ding L."/>
            <person name="Meyer R."/>
            <person name="Sabo A."/>
            <person name="Shotland Y."/>
            <person name="Sinha P."/>
            <person name="Wohldmann P.E."/>
            <person name="Cook L.L."/>
            <person name="Hickenbotham M.T."/>
            <person name="Eldred J."/>
            <person name="Williams D."/>
            <person name="Jones T.A."/>
            <person name="She X."/>
            <person name="Ciccarelli F.D."/>
            <person name="Izaurralde E."/>
            <person name="Taylor J."/>
            <person name="Schmutz J."/>
            <person name="Myers R.M."/>
            <person name="Cox D.R."/>
            <person name="Huang X."/>
            <person name="McPherson J.D."/>
            <person name="Mardis E.R."/>
            <person name="Clifton S.W."/>
            <person name="Warren W.C."/>
            <person name="Chinwalla A.T."/>
            <person name="Eddy S.R."/>
            <person name="Marra M.A."/>
            <person name="Ovcharenko I."/>
            <person name="Furey T.S."/>
            <person name="Miller W."/>
            <person name="Eichler E.E."/>
            <person name="Bork P."/>
            <person name="Suyama M."/>
            <person name="Torrents D."/>
            <person name="Waterston R.H."/>
            <person name="Wilson R.K."/>
        </authorList>
    </citation>
    <scope>NUCLEOTIDE SEQUENCE [LARGE SCALE GENOMIC DNA]</scope>
</reference>
<reference key="6">
    <citation type="submission" date="2005-07" db="EMBL/GenBank/DDBJ databases">
        <authorList>
            <person name="Mural R.J."/>
            <person name="Istrail S."/>
            <person name="Sutton G.G."/>
            <person name="Florea L."/>
            <person name="Halpern A.L."/>
            <person name="Mobarry C.M."/>
            <person name="Lippert R."/>
            <person name="Walenz B."/>
            <person name="Shatkay H."/>
            <person name="Dew I."/>
            <person name="Miller J.R."/>
            <person name="Flanigan M.J."/>
            <person name="Edwards N.J."/>
            <person name="Bolanos R."/>
            <person name="Fasulo D."/>
            <person name="Halldorsson B.V."/>
            <person name="Hannenhalli S."/>
            <person name="Turner R."/>
            <person name="Yooseph S."/>
            <person name="Lu F."/>
            <person name="Nusskern D.R."/>
            <person name="Shue B.C."/>
            <person name="Zheng X.H."/>
            <person name="Zhong F."/>
            <person name="Delcher A.L."/>
            <person name="Huson D.H."/>
            <person name="Kravitz S.A."/>
            <person name="Mouchard L."/>
            <person name="Reinert K."/>
            <person name="Remington K.A."/>
            <person name="Clark A.G."/>
            <person name="Waterman M.S."/>
            <person name="Eichler E.E."/>
            <person name="Adams M.D."/>
            <person name="Hunkapiller M.W."/>
            <person name="Myers E.W."/>
            <person name="Venter J.C."/>
        </authorList>
    </citation>
    <scope>NUCLEOTIDE SEQUENCE [LARGE SCALE GENOMIC DNA]</scope>
</reference>
<reference key="7">
    <citation type="journal article" date="2004" name="Genome Res.">
        <title>The status, quality, and expansion of the NIH full-length cDNA project: the Mammalian Gene Collection (MGC).</title>
        <authorList>
            <consortium name="The MGC Project Team"/>
        </authorList>
    </citation>
    <scope>NUCLEOTIDE SEQUENCE [LARGE SCALE MRNA] (ISOFORM 1)</scope>
    <source>
        <tissue>Testis</tissue>
    </source>
</reference>
<reference key="8">
    <citation type="journal article" date="2007" name="BMC Genomics">
        <title>The full-ORF clone resource of the German cDNA consortium.</title>
        <authorList>
            <person name="Bechtel S."/>
            <person name="Rosenfelder H."/>
            <person name="Duda A."/>
            <person name="Schmidt C.P."/>
            <person name="Ernst U."/>
            <person name="Wellenreuther R."/>
            <person name="Mehrle A."/>
            <person name="Schuster C."/>
            <person name="Bahr A."/>
            <person name="Bloecker H."/>
            <person name="Heubner D."/>
            <person name="Hoerlein A."/>
            <person name="Michel G."/>
            <person name="Wedler H."/>
            <person name="Koehrer K."/>
            <person name="Ottenwaelder B."/>
            <person name="Poustka A."/>
            <person name="Wiemann S."/>
            <person name="Schupp I."/>
        </authorList>
    </citation>
    <scope>NUCLEOTIDE SEQUENCE [LARGE SCALE MRNA] OF 1-278 (ISOFORM 1)</scope>
    <source>
        <tissue>Lymph node</tissue>
    </source>
</reference>
<reference key="9">
    <citation type="journal article" date="2011" name="PLoS ONE">
        <title>Regulation of brain-derived neurotrophic factor exon IV transcription through calcium responsive elements in cortical neurons.</title>
        <authorList>
            <person name="Zheng F."/>
            <person name="Zhou X."/>
            <person name="Luo Y."/>
            <person name="Xiao H."/>
            <person name="Wayman G."/>
            <person name="Wang H."/>
        </authorList>
    </citation>
    <scope>FUNCTION</scope>
</reference>
<sequence>MEQSNDSLRVNHNDGEESKTSAQVFEHLICMDSRDSSFGQNDSPTVLPITTREANNSLISQNIPGPLTQTQTLSAEQFHLVDQNGQAIQYELQSLGESNAQMMIVASPTENGQVLRVIPPTQTGMAQVIIPQGQLVDVNSPRDVPEEKPSNRNLPTVRVDTLADNTSNYILHPQTSFPLPKKSVTGMLEEPLLGPLQPLSSNTPIWACRLRSCEKIGDSYRGYCVSETELESVLTFHKQQTQSVWGTRQSPSPAKPATRLMWKSQYVPYDGIPFVNAGSRAVVMECQYGPRRKGFQLKKVSEQESRSCQLYKATCPARIYIKKVQKFPEYRVPTDPKIDKKIIRMEQEKAFNMLKKNLVDAGGVLRWYVQLPTQQAHQYHELETPCLTLSPSPFPVSSLEEEETAVRDENCALPSRLHPQVAHKIQELVSQGIEQVYAVRKQLRKFVERELFKPDEVPERHNLSFFPTVNDIKNHIHEVQKSLRNGDTVYNSEIIPATLQWTTDSGNILKETMTVTFAEGNSPGESITTKVETNQTRGSLSPEPTHLLSSLSSFQPKIFTQLQGLQLQPRYTSPDESPAVVSVNNQPSSSPSGLLDTIGSAVMNNNSLLLGQSHSLQRDTCLTQNNSTASTMGNLPEPDQNLVAMDELVEVGDVEDTGNLEGTVHRILLGDVQTIPIQIIDNHSALIEENPESTISVSQVKQEPKEPALSMEAKKTVDYKKLSAT</sequence>
<feature type="chain" id="PRO_0000076172" description="Calcium-responsive transcription factor">
    <location>
        <begin position="1"/>
        <end position="725"/>
    </location>
</feature>
<feature type="region of interest" description="Disordered" evidence="2">
    <location>
        <begin position="572"/>
        <end position="592"/>
    </location>
</feature>
<feature type="compositionally biased region" description="Low complexity" evidence="2">
    <location>
        <begin position="577"/>
        <end position="592"/>
    </location>
</feature>
<feature type="splice variant" id="VSP_016785" description="In isoform 2." evidence="5">
    <location>
        <begin position="1"/>
        <end position="102"/>
    </location>
</feature>
<feature type="splice variant" id="VSP_055713" description="In isoform 3." evidence="6">
    <location>
        <begin position="27"/>
        <end position="102"/>
    </location>
</feature>
<feature type="splice variant" id="VSP_016786" description="In isoform 2." evidence="5">
    <original>SRAVVMECQYGPRRKGFQLKKVSEQESRSCQ</original>
    <variation>TFLKNYFKRFSSSHSPLSKCDFPKVITFLFW</variation>
    <location>
        <begin position="279"/>
        <end position="309"/>
    </location>
</feature>
<feature type="splice variant" id="VSP_016787" description="In isoform 2." evidence="5">
    <location>
        <begin position="310"/>
        <end position="725"/>
    </location>
</feature>
<feature type="sequence conflict" description="In Ref. 2; AAK66819 and 4; BAB15088." evidence="7" ref="2 4">
    <original>K</original>
    <variation>E</variation>
    <location>
        <position position="238"/>
    </location>
</feature>
<feature type="sequence conflict" description="In Ref. 4; BAG64929." evidence="7" ref="4">
    <original>C</original>
    <variation>R</variation>
    <location>
        <position position="286"/>
    </location>
</feature>
<feature type="sequence conflict" description="In Ref. 4; BAB15088." evidence="7" ref="4">
    <original>VS</original>
    <variation>SQ</variation>
    <location>
        <begin position="300"/>
        <end position="301"/>
    </location>
</feature>
<feature type="sequence conflict" description="In Ref. 7; AAH33777." evidence="7" ref="7">
    <original>F</original>
    <variation>L</variation>
    <location>
        <position position="465"/>
    </location>
</feature>
<accession>Q8N187</accession>
<accession>B4E1W7</accession>
<accession>G3V1K7</accession>
<accession>Q8ND29</accession>
<accession>Q8WXC0</accession>
<accession>Q96J78</accession>
<accession>Q96Q38</accession>
<accession>Q96Q39</accession>
<accession>Q9H712</accession>
<protein>
    <recommendedName>
        <fullName>Calcium-responsive transcription factor</fullName>
    </recommendedName>
    <alternativeName>
        <fullName>Amyotrophic lateral sclerosis 2 chromosomal region candidate gene 8 protein</fullName>
    </alternativeName>
    <alternativeName>
        <fullName>Calcium-response factor</fullName>
        <shortName>CaRF</shortName>
    </alternativeName>
    <alternativeName>
        <fullName>Testis development protein NYD-SP24</fullName>
    </alternativeName>
</protein>
<keyword id="KW-0010">Activator</keyword>
<keyword id="KW-0025">Alternative splicing</keyword>
<keyword id="KW-0238">DNA-binding</keyword>
<keyword id="KW-0539">Nucleus</keyword>
<keyword id="KW-1267">Proteomics identification</keyword>
<keyword id="KW-1185">Reference proteome</keyword>
<keyword id="KW-0804">Transcription</keyword>
<keyword id="KW-0805">Transcription regulation</keyword>
<comment type="function">
    <text evidence="3 4">Acts as a transcriptional activator that mediates the calcium- and neuron-selective induction of BDNF exon III transcription. Binds to the consensus calcium-response element CaRE1 5'-CTATTTCGAG-3' sequence.</text>
</comment>
<comment type="interaction">
    <interactant intactId="EBI-745541">
        <id>Q8N187</id>
    </interactant>
    <interactant intactId="EBI-747776">
        <id>Q53EZ4</id>
        <label>CEP55</label>
    </interactant>
    <organismsDiffer>false</organismsDiffer>
    <experiments>3</experiments>
</comment>
<comment type="interaction">
    <interactant intactId="EBI-745541">
        <id>Q8N187</id>
    </interactant>
    <interactant intactId="EBI-617866">
        <id>Q9NSE2</id>
        <label>CISH</label>
    </interactant>
    <organismsDiffer>false</organismsDiffer>
    <experiments>3</experiments>
</comment>
<comment type="interaction">
    <interactant intactId="EBI-745541">
        <id>Q8N187</id>
    </interactant>
    <interactant intactId="EBI-357942">
        <id>Q9NR30</id>
        <label>DDX21</label>
    </interactant>
    <organismsDiffer>false</organismsDiffer>
    <experiments>3</experiments>
</comment>
<comment type="interaction">
    <interactant intactId="EBI-745541">
        <id>Q8N187</id>
    </interactant>
    <interactant intactId="EBI-3650647">
        <id>Q9BUZ4</id>
        <label>TRAF4</label>
    </interactant>
    <organismsDiffer>false</organismsDiffer>
    <experiments>3</experiments>
</comment>
<comment type="interaction">
    <interactant intactId="EBI-745541">
        <id>Q8N187</id>
    </interactant>
    <interactant intactId="EBI-5235984">
        <id>Q8NAP3</id>
        <label>ZBTB38</label>
    </interactant>
    <organismsDiffer>false</organismsDiffer>
    <experiments>3</experiments>
</comment>
<comment type="subcellular location">
    <subcellularLocation>
        <location evidence="1">Nucleus</location>
    </subcellularLocation>
</comment>
<comment type="alternative products">
    <event type="alternative splicing"/>
    <isoform>
        <id>Q8N187-1</id>
        <name>1</name>
        <sequence type="displayed"/>
    </isoform>
    <isoform>
        <id>Q8N187-2</id>
        <name>2</name>
        <sequence type="described" ref="VSP_016785 VSP_016786 VSP_016787"/>
    </isoform>
    <isoform>
        <id>Q8N187-3</id>
        <name>3</name>
        <sequence type="described" ref="VSP_055713"/>
    </isoform>
</comment>
<comment type="domain">
    <text evidence="3">The N-terminus is necessary for DNA-binding. The C-terminus is necessary for transcriptional activation (PubMed:11832226).</text>
</comment>
<comment type="sequence caution" evidence="7">
    <conflict type="erroneous initiation">
        <sequence resource="EMBL-CDS" id="BAB15088"/>
    </conflict>
    <text>Truncated N-terminus.</text>
</comment>
<comment type="sequence caution" evidence="7">
    <conflict type="frameshift">
        <sequence resource="EMBL-CDS" id="BAB69018"/>
    </conflict>
</comment>